<protein>
    <recommendedName>
        <fullName>Vitamin K-dependent protein Z</fullName>
    </recommendedName>
</protein>
<accession>Q9CQW3</accession>
<organism>
    <name type="scientific">Mus musculus</name>
    <name type="common">Mouse</name>
    <dbReference type="NCBI Taxonomy" id="10090"/>
    <lineage>
        <taxon>Eukaryota</taxon>
        <taxon>Metazoa</taxon>
        <taxon>Chordata</taxon>
        <taxon>Craniata</taxon>
        <taxon>Vertebrata</taxon>
        <taxon>Euteleostomi</taxon>
        <taxon>Mammalia</taxon>
        <taxon>Eutheria</taxon>
        <taxon>Euarchontoglires</taxon>
        <taxon>Glires</taxon>
        <taxon>Rodentia</taxon>
        <taxon>Myomorpha</taxon>
        <taxon>Muroidea</taxon>
        <taxon>Muridae</taxon>
        <taxon>Murinae</taxon>
        <taxon>Mus</taxon>
        <taxon>Mus</taxon>
    </lineage>
</organism>
<keyword id="KW-0094">Blood coagulation</keyword>
<keyword id="KW-0106">Calcium</keyword>
<keyword id="KW-0165">Cleavage on pair of basic residues</keyword>
<keyword id="KW-1015">Disulfide bond</keyword>
<keyword id="KW-0245">EGF-like domain</keyword>
<keyword id="KW-0301">Gamma-carboxyglutamic acid</keyword>
<keyword id="KW-0325">Glycoprotein</keyword>
<keyword id="KW-0356">Hemostasis</keyword>
<keyword id="KW-0379">Hydroxylation</keyword>
<keyword id="KW-1185">Reference proteome</keyword>
<keyword id="KW-0677">Repeat</keyword>
<keyword id="KW-0964">Secreted</keyword>
<keyword id="KW-0721">Serine protease homolog</keyword>
<keyword id="KW-0732">Signal</keyword>
<feature type="signal peptide" evidence="3">
    <location>
        <begin position="1"/>
        <end position="22"/>
    </location>
</feature>
<feature type="propeptide" id="PRO_0000028490" evidence="1">
    <location>
        <begin position="23"/>
        <end position="40"/>
    </location>
</feature>
<feature type="chain" id="PRO_0000028491" description="Vitamin K-dependent protein Z">
    <location>
        <begin position="41"/>
        <end position="399"/>
    </location>
</feature>
<feature type="domain" description="Gla" evidence="6">
    <location>
        <begin position="41"/>
        <end position="86"/>
    </location>
</feature>
<feature type="domain" description="EGF-like 1" evidence="4">
    <location>
        <begin position="87"/>
        <end position="123"/>
    </location>
</feature>
<feature type="domain" description="EGF-like 2" evidence="4">
    <location>
        <begin position="125"/>
        <end position="166"/>
    </location>
</feature>
<feature type="domain" description="Peptidase S1" evidence="5">
    <location>
        <begin position="172"/>
        <end position="399"/>
    </location>
</feature>
<feature type="modified residue" description="4-carboxyglutamate" evidence="2 6">
    <location>
        <position position="47"/>
    </location>
</feature>
<feature type="modified residue" description="4-carboxyglutamate" evidence="2 6">
    <location>
        <position position="48"/>
    </location>
</feature>
<feature type="modified residue" description="4-carboxyglutamate" evidence="2 6">
    <location>
        <position position="55"/>
    </location>
</feature>
<feature type="modified residue" description="4-carboxyglutamate" evidence="2 6">
    <location>
        <position position="57"/>
    </location>
</feature>
<feature type="modified residue" description="4-carboxyglutamate" evidence="2 6">
    <location>
        <position position="60"/>
    </location>
</feature>
<feature type="modified residue" description="4-carboxyglutamate" evidence="2 6">
    <location>
        <position position="61"/>
    </location>
</feature>
<feature type="modified residue" description="4-carboxyglutamate" evidence="2 6">
    <location>
        <position position="66"/>
    </location>
</feature>
<feature type="modified residue" description="4-carboxyglutamate" evidence="2 6">
    <location>
        <position position="67"/>
    </location>
</feature>
<feature type="modified residue" description="4-carboxyglutamate" evidence="2 6">
    <location>
        <position position="70"/>
    </location>
</feature>
<feature type="modified residue" description="4-carboxyglutamate" evidence="2 6">
    <location>
        <position position="73"/>
    </location>
</feature>
<feature type="modified residue" description="4-carboxyglutamate" evidence="2 6">
    <location>
        <position position="80"/>
    </location>
</feature>
<feature type="modified residue" description="(3R)-3-hydroxyaspartate" evidence="1">
    <location>
        <position position="104"/>
    </location>
</feature>
<feature type="glycosylation site" description="N-linked (GlcNAc...) asparagine" evidence="3">
    <location>
        <position position="99"/>
    </location>
</feature>
<feature type="glycosylation site" description="N-linked (GlcNAc...) asparagine" evidence="7">
    <location>
        <position position="230"/>
    </location>
</feature>
<feature type="glycosylation site" description="N-linked (GlcNAc...) asparagine" evidence="3">
    <location>
        <position position="305"/>
    </location>
</feature>
<feature type="glycosylation site" description="N-linked (GlcNAc...) asparagine" evidence="3">
    <location>
        <position position="331"/>
    </location>
</feature>
<feature type="disulfide bond" evidence="1">
    <location>
        <begin position="58"/>
        <end position="63"/>
    </location>
</feature>
<feature type="disulfide bond" evidence="1">
    <location>
        <begin position="91"/>
        <end position="102"/>
    </location>
</feature>
<feature type="disulfide bond" evidence="1">
    <location>
        <begin position="96"/>
        <end position="111"/>
    </location>
</feature>
<feature type="disulfide bond" evidence="1">
    <location>
        <begin position="113"/>
        <end position="122"/>
    </location>
</feature>
<feature type="disulfide bond" evidence="1">
    <location>
        <begin position="129"/>
        <end position="141"/>
    </location>
</feature>
<feature type="disulfide bond" evidence="1">
    <location>
        <begin position="137"/>
        <end position="150"/>
    </location>
</feature>
<feature type="disulfide bond" evidence="1">
    <location>
        <begin position="152"/>
        <end position="165"/>
    </location>
</feature>
<feature type="disulfide bond" evidence="1">
    <location>
        <begin position="208"/>
        <end position="224"/>
    </location>
</feature>
<feature type="disulfide bond" evidence="1">
    <location>
        <begin position="326"/>
        <end position="340"/>
    </location>
</feature>
<dbReference type="EMBL" id="AK005011">
    <property type="status" value="NOT_ANNOTATED_CDS"/>
    <property type="molecule type" value="mRNA"/>
</dbReference>
<dbReference type="EMBL" id="AK008819">
    <property type="protein sequence ID" value="BAB25912.1"/>
    <property type="molecule type" value="mRNA"/>
</dbReference>
<dbReference type="CCDS" id="CCDS22105.1"/>
<dbReference type="RefSeq" id="NP_080110.1">
    <property type="nucleotide sequence ID" value="NM_025834.4"/>
</dbReference>
<dbReference type="SMR" id="Q9CQW3"/>
<dbReference type="FunCoup" id="Q9CQW3">
    <property type="interactions" value="316"/>
</dbReference>
<dbReference type="STRING" id="10090.ENSMUSP00000033822"/>
<dbReference type="MEROPS" id="S01.996"/>
<dbReference type="GlyCosmos" id="Q9CQW3">
    <property type="glycosylation" value="4 sites, No reported glycans"/>
</dbReference>
<dbReference type="GlyGen" id="Q9CQW3">
    <property type="glycosylation" value="4 sites, 2 N-linked glycans (2 sites)"/>
</dbReference>
<dbReference type="iPTMnet" id="Q9CQW3"/>
<dbReference type="PhosphoSitePlus" id="Q9CQW3"/>
<dbReference type="jPOST" id="Q9CQW3"/>
<dbReference type="PaxDb" id="10090-ENSMUSP00000033822"/>
<dbReference type="ProteomicsDB" id="291889"/>
<dbReference type="Antibodypedia" id="25847">
    <property type="antibodies" value="216 antibodies from 27 providers"/>
</dbReference>
<dbReference type="DNASU" id="66901"/>
<dbReference type="Ensembl" id="ENSMUST00000033822.4">
    <property type="protein sequence ID" value="ENSMUSP00000033822.3"/>
    <property type="gene ID" value="ENSMUSG00000031445.6"/>
</dbReference>
<dbReference type="GeneID" id="66901"/>
<dbReference type="KEGG" id="mmu:66901"/>
<dbReference type="UCSC" id="uc009kwu.1">
    <property type="organism name" value="mouse"/>
</dbReference>
<dbReference type="AGR" id="MGI:1860488"/>
<dbReference type="CTD" id="8858"/>
<dbReference type="MGI" id="MGI:1860488">
    <property type="gene designation" value="Proz"/>
</dbReference>
<dbReference type="VEuPathDB" id="HostDB:ENSMUSG00000031445"/>
<dbReference type="eggNOG" id="KOG3627">
    <property type="taxonomic scope" value="Eukaryota"/>
</dbReference>
<dbReference type="GeneTree" id="ENSGT00940000154505"/>
<dbReference type="HOGENOM" id="CLU_006842_19_5_1"/>
<dbReference type="InParanoid" id="Q9CQW3"/>
<dbReference type="OMA" id="KNECHHH"/>
<dbReference type="OrthoDB" id="7726766at2759"/>
<dbReference type="PhylomeDB" id="Q9CQW3"/>
<dbReference type="TreeFam" id="TF327329"/>
<dbReference type="Reactome" id="R-MMU-159740">
    <property type="pathway name" value="Gamma-carboxylation of protein precursors"/>
</dbReference>
<dbReference type="Reactome" id="R-MMU-159763">
    <property type="pathway name" value="Transport of gamma-carboxylated protein precursors from the endoplasmic reticulum to the Golgi apparatus"/>
</dbReference>
<dbReference type="Reactome" id="R-MMU-159782">
    <property type="pathway name" value="Removal of aminoterminal propeptides from gamma-carboxylated proteins"/>
</dbReference>
<dbReference type="BioGRID-ORCS" id="66901">
    <property type="hits" value="2 hits in 78 CRISPR screens"/>
</dbReference>
<dbReference type="PRO" id="PR:Q9CQW3"/>
<dbReference type="Proteomes" id="UP000000589">
    <property type="component" value="Chromosome 8"/>
</dbReference>
<dbReference type="RNAct" id="Q9CQW3">
    <property type="molecule type" value="protein"/>
</dbReference>
<dbReference type="Bgee" id="ENSMUSG00000031445">
    <property type="expression patterns" value="Expressed in liver and 59 other cell types or tissues"/>
</dbReference>
<dbReference type="ExpressionAtlas" id="Q9CQW3">
    <property type="expression patterns" value="baseline and differential"/>
</dbReference>
<dbReference type="GO" id="GO:0005576">
    <property type="term" value="C:extracellular region"/>
    <property type="evidence" value="ECO:0000314"/>
    <property type="project" value="MGI"/>
</dbReference>
<dbReference type="GO" id="GO:0005509">
    <property type="term" value="F:calcium ion binding"/>
    <property type="evidence" value="ECO:0000304"/>
    <property type="project" value="MGI"/>
</dbReference>
<dbReference type="GO" id="GO:0004252">
    <property type="term" value="F:serine-type endopeptidase activity"/>
    <property type="evidence" value="ECO:0007669"/>
    <property type="project" value="InterPro"/>
</dbReference>
<dbReference type="GO" id="GO:0007596">
    <property type="term" value="P:blood coagulation"/>
    <property type="evidence" value="ECO:0000314"/>
    <property type="project" value="MGI"/>
</dbReference>
<dbReference type="GO" id="GO:0006508">
    <property type="term" value="P:proteolysis"/>
    <property type="evidence" value="ECO:0007669"/>
    <property type="project" value="InterPro"/>
</dbReference>
<dbReference type="CDD" id="cd00054">
    <property type="entry name" value="EGF_CA"/>
    <property type="match status" value="1"/>
</dbReference>
<dbReference type="FunFam" id="2.10.25.10:FF:000162">
    <property type="entry name" value="Coagulation factor X (Predicted)"/>
    <property type="match status" value="1"/>
</dbReference>
<dbReference type="FunFam" id="2.10.25.10:FF:000480">
    <property type="entry name" value="Protein Z, vitamin K-dependent plasma glycoprotein"/>
    <property type="match status" value="1"/>
</dbReference>
<dbReference type="FunFam" id="2.40.10.10:FF:000114">
    <property type="entry name" value="Protein Z, vitamin K-dependent plasma glycoprotein"/>
    <property type="match status" value="1"/>
</dbReference>
<dbReference type="FunFam" id="2.40.10.10:FF:000117">
    <property type="entry name" value="Protein Z, vitamin K-dependent plasma glycoprotein"/>
    <property type="match status" value="1"/>
</dbReference>
<dbReference type="FunFam" id="4.10.740.10:FF:000001">
    <property type="entry name" value="vitamin K-dependent protein S"/>
    <property type="match status" value="1"/>
</dbReference>
<dbReference type="Gene3D" id="4.10.740.10">
    <property type="entry name" value="Coagulation Factor IX"/>
    <property type="match status" value="1"/>
</dbReference>
<dbReference type="Gene3D" id="2.10.25.10">
    <property type="entry name" value="Laminin"/>
    <property type="match status" value="2"/>
</dbReference>
<dbReference type="Gene3D" id="2.40.10.10">
    <property type="entry name" value="Trypsin-like serine proteases"/>
    <property type="match status" value="2"/>
</dbReference>
<dbReference type="InterPro" id="IPR017857">
    <property type="entry name" value="Coagulation_fac-like_Gla_dom"/>
</dbReference>
<dbReference type="InterPro" id="IPR001881">
    <property type="entry name" value="EGF-like_Ca-bd_dom"/>
</dbReference>
<dbReference type="InterPro" id="IPR000742">
    <property type="entry name" value="EGF-like_dom"/>
</dbReference>
<dbReference type="InterPro" id="IPR000152">
    <property type="entry name" value="EGF-type_Asp/Asn_hydroxyl_site"/>
</dbReference>
<dbReference type="InterPro" id="IPR035972">
    <property type="entry name" value="GLA-like_dom_SF"/>
</dbReference>
<dbReference type="InterPro" id="IPR000294">
    <property type="entry name" value="GLA_domain"/>
</dbReference>
<dbReference type="InterPro" id="IPR012224">
    <property type="entry name" value="Pept_S1A_FX"/>
</dbReference>
<dbReference type="InterPro" id="IPR050442">
    <property type="entry name" value="Peptidase_S1_coag_factors"/>
</dbReference>
<dbReference type="InterPro" id="IPR009003">
    <property type="entry name" value="Peptidase_S1_PA"/>
</dbReference>
<dbReference type="InterPro" id="IPR043504">
    <property type="entry name" value="Peptidase_S1_PA_chymotrypsin"/>
</dbReference>
<dbReference type="InterPro" id="IPR001254">
    <property type="entry name" value="Trypsin_dom"/>
</dbReference>
<dbReference type="PANTHER" id="PTHR24278">
    <property type="entry name" value="COAGULATION FACTOR"/>
    <property type="match status" value="1"/>
</dbReference>
<dbReference type="PANTHER" id="PTHR24278:SF20">
    <property type="entry name" value="VITAMIN K-DEPENDENT PROTEIN Z"/>
    <property type="match status" value="1"/>
</dbReference>
<dbReference type="Pfam" id="PF00008">
    <property type="entry name" value="EGF"/>
    <property type="match status" value="1"/>
</dbReference>
<dbReference type="Pfam" id="PF14670">
    <property type="entry name" value="FXa_inhibition"/>
    <property type="match status" value="1"/>
</dbReference>
<dbReference type="Pfam" id="PF00594">
    <property type="entry name" value="Gla"/>
    <property type="match status" value="1"/>
</dbReference>
<dbReference type="Pfam" id="PF00089">
    <property type="entry name" value="Trypsin"/>
    <property type="match status" value="1"/>
</dbReference>
<dbReference type="PIRSF" id="PIRSF001143">
    <property type="entry name" value="Factor_X"/>
    <property type="match status" value="1"/>
</dbReference>
<dbReference type="PRINTS" id="PR00001">
    <property type="entry name" value="GLABLOOD"/>
</dbReference>
<dbReference type="SMART" id="SM00181">
    <property type="entry name" value="EGF"/>
    <property type="match status" value="2"/>
</dbReference>
<dbReference type="SMART" id="SM00179">
    <property type="entry name" value="EGF_CA"/>
    <property type="match status" value="2"/>
</dbReference>
<dbReference type="SMART" id="SM00069">
    <property type="entry name" value="GLA"/>
    <property type="match status" value="1"/>
</dbReference>
<dbReference type="SMART" id="SM00020">
    <property type="entry name" value="Tryp_SPc"/>
    <property type="match status" value="1"/>
</dbReference>
<dbReference type="SUPFAM" id="SSF57196">
    <property type="entry name" value="EGF/Laminin"/>
    <property type="match status" value="1"/>
</dbReference>
<dbReference type="SUPFAM" id="SSF57630">
    <property type="entry name" value="GLA-domain"/>
    <property type="match status" value="1"/>
</dbReference>
<dbReference type="SUPFAM" id="SSF50494">
    <property type="entry name" value="Trypsin-like serine proteases"/>
    <property type="match status" value="1"/>
</dbReference>
<dbReference type="PROSITE" id="PS00010">
    <property type="entry name" value="ASX_HYDROXYL"/>
    <property type="match status" value="1"/>
</dbReference>
<dbReference type="PROSITE" id="PS00022">
    <property type="entry name" value="EGF_1"/>
    <property type="match status" value="1"/>
</dbReference>
<dbReference type="PROSITE" id="PS01186">
    <property type="entry name" value="EGF_2"/>
    <property type="match status" value="2"/>
</dbReference>
<dbReference type="PROSITE" id="PS50026">
    <property type="entry name" value="EGF_3"/>
    <property type="match status" value="1"/>
</dbReference>
<dbReference type="PROSITE" id="PS00011">
    <property type="entry name" value="GLA_1"/>
    <property type="match status" value="1"/>
</dbReference>
<dbReference type="PROSITE" id="PS50998">
    <property type="entry name" value="GLA_2"/>
    <property type="match status" value="1"/>
</dbReference>
<dbReference type="PROSITE" id="PS50240">
    <property type="entry name" value="TRYPSIN_DOM"/>
    <property type="match status" value="1"/>
</dbReference>
<comment type="function">
    <text evidence="1">Appears to assist hemostasis by binding thrombin and promoting its association with phospholipid vesicles. Inhibits activity of the coagulation protease factor Xa in the presence of SERPINA10, calcium and phospholipids (By similarity).</text>
</comment>
<comment type="subcellular location">
    <subcellularLocation>
        <location>Secreted</location>
    </subcellularLocation>
</comment>
<comment type="tissue specificity">
    <text>Plasma.</text>
</comment>
<comment type="PTM">
    <text evidence="1">The iron and 2-oxoglutarate dependent 3-hydroxylation of aspartate and asparagine is (R) stereospecific within EGF domains.</text>
</comment>
<comment type="similarity">
    <text evidence="5">Belongs to the peptidase S1 family.</text>
</comment>
<comment type="caution">
    <text evidence="8">Although homologous with the vitamin K-dependent clotting factors, it has lost two of the essential catalytic residues and has no enzymatic activity.</text>
</comment>
<name>PROZ_MOUSE</name>
<sequence>MAGCILLLRGFILTLILHQVELSVFLPAPKANNVLRRWRRGSSYFLEEIFQGNLEKECYEEVCNYEEAREVFENDVITDEFWRQYGGGSPCVSQPCLNNGTCEDHIRSYSCTCSPGYEGKTCAMAKNECHLERTDGCQHFCHPGQSSYMCSCAKGYKLGKDQKSCGPSDKCACGALTSEHIRMTKSSQSQPSFPWQVRLTNSEGEDFCAGVLLQEDFVLTTAKCSLLHSNISVKANVDQRIRIKSTHVHMRYDEESGENDVSLLQLEEPLQCPSSGLPVCVPERDFAEHVLIPGTEGLLSGWMLNGTHLATTPMLLSVTQADGEECGQTLNVTVTTRTSCEKGSVVMGPWVEGSVVTREHKGTWFLTGILGSPPPPGQSQMLLLTAVPRYSMWFKQIMK</sequence>
<proteinExistence type="evidence at protein level"/>
<gene>
    <name type="primary">Proz</name>
</gene>
<reference key="1">
    <citation type="journal article" date="2005" name="Science">
        <title>The transcriptional landscape of the mammalian genome.</title>
        <authorList>
            <person name="Carninci P."/>
            <person name="Kasukawa T."/>
            <person name="Katayama S."/>
            <person name="Gough J."/>
            <person name="Frith M.C."/>
            <person name="Maeda N."/>
            <person name="Oyama R."/>
            <person name="Ravasi T."/>
            <person name="Lenhard B."/>
            <person name="Wells C."/>
            <person name="Kodzius R."/>
            <person name="Shimokawa K."/>
            <person name="Bajic V.B."/>
            <person name="Brenner S.E."/>
            <person name="Batalov S."/>
            <person name="Forrest A.R."/>
            <person name="Zavolan M."/>
            <person name="Davis M.J."/>
            <person name="Wilming L.G."/>
            <person name="Aidinis V."/>
            <person name="Allen J.E."/>
            <person name="Ambesi-Impiombato A."/>
            <person name="Apweiler R."/>
            <person name="Aturaliya R.N."/>
            <person name="Bailey T.L."/>
            <person name="Bansal M."/>
            <person name="Baxter L."/>
            <person name="Beisel K.W."/>
            <person name="Bersano T."/>
            <person name="Bono H."/>
            <person name="Chalk A.M."/>
            <person name="Chiu K.P."/>
            <person name="Choudhary V."/>
            <person name="Christoffels A."/>
            <person name="Clutterbuck D.R."/>
            <person name="Crowe M.L."/>
            <person name="Dalla E."/>
            <person name="Dalrymple B.P."/>
            <person name="de Bono B."/>
            <person name="Della Gatta G."/>
            <person name="di Bernardo D."/>
            <person name="Down T."/>
            <person name="Engstrom P."/>
            <person name="Fagiolini M."/>
            <person name="Faulkner G."/>
            <person name="Fletcher C.F."/>
            <person name="Fukushima T."/>
            <person name="Furuno M."/>
            <person name="Futaki S."/>
            <person name="Gariboldi M."/>
            <person name="Georgii-Hemming P."/>
            <person name="Gingeras T.R."/>
            <person name="Gojobori T."/>
            <person name="Green R.E."/>
            <person name="Gustincich S."/>
            <person name="Harbers M."/>
            <person name="Hayashi Y."/>
            <person name="Hensch T.K."/>
            <person name="Hirokawa N."/>
            <person name="Hill D."/>
            <person name="Huminiecki L."/>
            <person name="Iacono M."/>
            <person name="Ikeo K."/>
            <person name="Iwama A."/>
            <person name="Ishikawa T."/>
            <person name="Jakt M."/>
            <person name="Kanapin A."/>
            <person name="Katoh M."/>
            <person name="Kawasawa Y."/>
            <person name="Kelso J."/>
            <person name="Kitamura H."/>
            <person name="Kitano H."/>
            <person name="Kollias G."/>
            <person name="Krishnan S.P."/>
            <person name="Kruger A."/>
            <person name="Kummerfeld S.K."/>
            <person name="Kurochkin I.V."/>
            <person name="Lareau L.F."/>
            <person name="Lazarevic D."/>
            <person name="Lipovich L."/>
            <person name="Liu J."/>
            <person name="Liuni S."/>
            <person name="McWilliam S."/>
            <person name="Madan Babu M."/>
            <person name="Madera M."/>
            <person name="Marchionni L."/>
            <person name="Matsuda H."/>
            <person name="Matsuzawa S."/>
            <person name="Miki H."/>
            <person name="Mignone F."/>
            <person name="Miyake S."/>
            <person name="Morris K."/>
            <person name="Mottagui-Tabar S."/>
            <person name="Mulder N."/>
            <person name="Nakano N."/>
            <person name="Nakauchi H."/>
            <person name="Ng P."/>
            <person name="Nilsson R."/>
            <person name="Nishiguchi S."/>
            <person name="Nishikawa S."/>
            <person name="Nori F."/>
            <person name="Ohara O."/>
            <person name="Okazaki Y."/>
            <person name="Orlando V."/>
            <person name="Pang K.C."/>
            <person name="Pavan W.J."/>
            <person name="Pavesi G."/>
            <person name="Pesole G."/>
            <person name="Petrovsky N."/>
            <person name="Piazza S."/>
            <person name="Reed J."/>
            <person name="Reid J.F."/>
            <person name="Ring B.Z."/>
            <person name="Ringwald M."/>
            <person name="Rost B."/>
            <person name="Ruan Y."/>
            <person name="Salzberg S.L."/>
            <person name="Sandelin A."/>
            <person name="Schneider C."/>
            <person name="Schoenbach C."/>
            <person name="Sekiguchi K."/>
            <person name="Semple C.A."/>
            <person name="Seno S."/>
            <person name="Sessa L."/>
            <person name="Sheng Y."/>
            <person name="Shibata Y."/>
            <person name="Shimada H."/>
            <person name="Shimada K."/>
            <person name="Silva D."/>
            <person name="Sinclair B."/>
            <person name="Sperling S."/>
            <person name="Stupka E."/>
            <person name="Sugiura K."/>
            <person name="Sultana R."/>
            <person name="Takenaka Y."/>
            <person name="Taki K."/>
            <person name="Tammoja K."/>
            <person name="Tan S.L."/>
            <person name="Tang S."/>
            <person name="Taylor M.S."/>
            <person name="Tegner J."/>
            <person name="Teichmann S.A."/>
            <person name="Ueda H.R."/>
            <person name="van Nimwegen E."/>
            <person name="Verardo R."/>
            <person name="Wei C.L."/>
            <person name="Yagi K."/>
            <person name="Yamanishi H."/>
            <person name="Zabarovsky E."/>
            <person name="Zhu S."/>
            <person name="Zimmer A."/>
            <person name="Hide W."/>
            <person name="Bult C."/>
            <person name="Grimmond S.M."/>
            <person name="Teasdale R.D."/>
            <person name="Liu E.T."/>
            <person name="Brusic V."/>
            <person name="Quackenbush J."/>
            <person name="Wahlestedt C."/>
            <person name="Mattick J.S."/>
            <person name="Hume D.A."/>
            <person name="Kai C."/>
            <person name="Sasaki D."/>
            <person name="Tomaru Y."/>
            <person name="Fukuda S."/>
            <person name="Kanamori-Katayama M."/>
            <person name="Suzuki M."/>
            <person name="Aoki J."/>
            <person name="Arakawa T."/>
            <person name="Iida J."/>
            <person name="Imamura K."/>
            <person name="Itoh M."/>
            <person name="Kato T."/>
            <person name="Kawaji H."/>
            <person name="Kawagashira N."/>
            <person name="Kawashima T."/>
            <person name="Kojima M."/>
            <person name="Kondo S."/>
            <person name="Konno H."/>
            <person name="Nakano K."/>
            <person name="Ninomiya N."/>
            <person name="Nishio T."/>
            <person name="Okada M."/>
            <person name="Plessy C."/>
            <person name="Shibata K."/>
            <person name="Shiraki T."/>
            <person name="Suzuki S."/>
            <person name="Tagami M."/>
            <person name="Waki K."/>
            <person name="Watahiki A."/>
            <person name="Okamura-Oho Y."/>
            <person name="Suzuki H."/>
            <person name="Kawai J."/>
            <person name="Hayashizaki Y."/>
        </authorList>
    </citation>
    <scope>NUCLEOTIDE SEQUENCE [LARGE SCALE MRNA]</scope>
    <source>
        <strain>C57BL/6J</strain>
        <tissue>Liver</tissue>
        <tissue>Stomach</tissue>
    </source>
</reference>
<reference key="2">
    <citation type="journal article" date="2007" name="J. Proteome Res.">
        <title>Enhanced analysis of the mouse plasma proteome using cysteine-containing tryptic glycopeptides.</title>
        <authorList>
            <person name="Bernhard O.K."/>
            <person name="Kapp E.A."/>
            <person name="Simpson R.J."/>
        </authorList>
    </citation>
    <scope>GLYCOSYLATION [LARGE SCALE ANALYSIS] AT ASN-230</scope>
    <source>
        <strain>C57BL/6J</strain>
        <tissue>Plasma</tissue>
    </source>
</reference>
<evidence type="ECO:0000250" key="1"/>
<evidence type="ECO:0000250" key="2">
    <source>
        <dbReference type="UniProtKB" id="P00744"/>
    </source>
</evidence>
<evidence type="ECO:0000255" key="3"/>
<evidence type="ECO:0000255" key="4">
    <source>
        <dbReference type="PROSITE-ProRule" id="PRU00076"/>
    </source>
</evidence>
<evidence type="ECO:0000255" key="5">
    <source>
        <dbReference type="PROSITE-ProRule" id="PRU00274"/>
    </source>
</evidence>
<evidence type="ECO:0000255" key="6">
    <source>
        <dbReference type="PROSITE-ProRule" id="PRU00463"/>
    </source>
</evidence>
<evidence type="ECO:0000269" key="7">
    <source>
    </source>
</evidence>
<evidence type="ECO:0000305" key="8"/>